<protein>
    <recommendedName>
        <fullName>Ribulose bisphosphate carboxylase large chain</fullName>
        <shortName>RuBisCO large subunit</shortName>
        <ecNumber>4.1.1.39</ecNumber>
    </recommendedName>
</protein>
<reference key="1">
    <citation type="journal article" date="1984" name="Mol. Gen. Genet.">
        <title>Gene organization of chloroplast DNA from the broad bean Vicia faba.</title>
        <authorList>
            <person name="Shinozaki K."/>
            <person name="Sun C.-R."/>
            <person name="Sugiura M."/>
        </authorList>
    </citation>
    <scope>NUCLEOTIDE SEQUENCE [GENOMIC DNA]</scope>
</reference>
<comment type="function">
    <text evidence="1">RuBisCO catalyzes two reactions: the carboxylation of D-ribulose 1,5-bisphosphate, the primary event in carbon dioxide fixation, as well as the oxidative fragmentation of the pentose substrate in the photorespiration process. Both reactions occur simultaneously and in competition at the same active site (By similarity).</text>
</comment>
<comment type="catalytic activity">
    <reaction>
        <text>2 (2R)-3-phosphoglycerate + 2 H(+) = D-ribulose 1,5-bisphosphate + CO2 + H2O</text>
        <dbReference type="Rhea" id="RHEA:23124"/>
        <dbReference type="ChEBI" id="CHEBI:15377"/>
        <dbReference type="ChEBI" id="CHEBI:15378"/>
        <dbReference type="ChEBI" id="CHEBI:16526"/>
        <dbReference type="ChEBI" id="CHEBI:57870"/>
        <dbReference type="ChEBI" id="CHEBI:58272"/>
        <dbReference type="EC" id="4.1.1.39"/>
    </reaction>
</comment>
<comment type="catalytic activity">
    <reaction>
        <text>D-ribulose 1,5-bisphosphate + O2 = 2-phosphoglycolate + (2R)-3-phosphoglycerate + 2 H(+)</text>
        <dbReference type="Rhea" id="RHEA:36631"/>
        <dbReference type="ChEBI" id="CHEBI:15378"/>
        <dbReference type="ChEBI" id="CHEBI:15379"/>
        <dbReference type="ChEBI" id="CHEBI:57870"/>
        <dbReference type="ChEBI" id="CHEBI:58033"/>
        <dbReference type="ChEBI" id="CHEBI:58272"/>
    </reaction>
</comment>
<comment type="subunit">
    <text evidence="1">Heterohexadecamer of 8 large chains and 8 small chains.</text>
</comment>
<comment type="subcellular location">
    <subcellularLocation>
        <location>Plastid</location>
        <location>Chloroplast</location>
    </subcellularLocation>
</comment>
<comment type="miscellaneous">
    <text evidence="1">The basic functional RuBisCO is composed of a large chain homodimer in a 'head-to-tail' conformation. In form I RuBisCO this homodimer is arranged in a barrel-like tetramer with the small subunits forming a tetrameric 'cap' on each end of the 'barrel' (By similarity).</text>
</comment>
<comment type="similarity">
    <text evidence="2">Belongs to the RuBisCO large chain family. Type I subfamily.</text>
</comment>
<gene>
    <name type="primary">rbcL</name>
</gene>
<proteinExistence type="inferred from homology"/>
<name>RBL_VICFA</name>
<geneLocation type="chloroplast"/>
<evidence type="ECO:0000250" key="1"/>
<evidence type="ECO:0000305" key="2"/>
<feature type="propeptide" id="PRO_0000031437" evidence="1">
    <location>
        <begin position="1"/>
        <end position="2"/>
    </location>
</feature>
<feature type="chain" id="PRO_0000031438" description="Ribulose bisphosphate carboxylase large chain">
    <location>
        <begin position="3"/>
        <end position="26" status="greater than"/>
    </location>
</feature>
<feature type="modified residue" description="N-acetylproline" evidence="1">
    <location>
        <position position="3"/>
    </location>
</feature>
<feature type="non-terminal residue">
    <location>
        <position position="26"/>
    </location>
</feature>
<organism>
    <name type="scientific">Vicia faba</name>
    <name type="common">Broad bean</name>
    <name type="synonym">Faba vulgaris</name>
    <dbReference type="NCBI Taxonomy" id="3906"/>
    <lineage>
        <taxon>Eukaryota</taxon>
        <taxon>Viridiplantae</taxon>
        <taxon>Streptophyta</taxon>
        <taxon>Embryophyta</taxon>
        <taxon>Tracheophyta</taxon>
        <taxon>Spermatophyta</taxon>
        <taxon>Magnoliopsida</taxon>
        <taxon>eudicotyledons</taxon>
        <taxon>Gunneridae</taxon>
        <taxon>Pentapetalae</taxon>
        <taxon>rosids</taxon>
        <taxon>fabids</taxon>
        <taxon>Fabales</taxon>
        <taxon>Fabaceae</taxon>
        <taxon>Papilionoideae</taxon>
        <taxon>50 kb inversion clade</taxon>
        <taxon>NPAAA clade</taxon>
        <taxon>Hologalegina</taxon>
        <taxon>IRL clade</taxon>
        <taxon>Fabeae</taxon>
        <taxon>Vicia</taxon>
    </lineage>
</organism>
<keyword id="KW-0007">Acetylation</keyword>
<keyword id="KW-0113">Calvin cycle</keyword>
<keyword id="KW-0120">Carbon dioxide fixation</keyword>
<keyword id="KW-0150">Chloroplast</keyword>
<keyword id="KW-0456">Lyase</keyword>
<keyword id="KW-0503">Monooxygenase</keyword>
<keyword id="KW-0560">Oxidoreductase</keyword>
<keyword id="KW-0601">Photorespiration</keyword>
<keyword id="KW-0602">Photosynthesis</keyword>
<keyword id="KW-0934">Plastid</keyword>
<dbReference type="EC" id="4.1.1.39"/>
<dbReference type="EMBL" id="X01167">
    <property type="protein sequence ID" value="CAA25614.1"/>
    <property type="molecule type" value="Genomic_DNA"/>
</dbReference>
<dbReference type="PIR" id="S07303">
    <property type="entry name" value="S07303"/>
</dbReference>
<dbReference type="SMR" id="P05699"/>
<dbReference type="GO" id="GO:0009507">
    <property type="term" value="C:chloroplast"/>
    <property type="evidence" value="ECO:0007669"/>
    <property type="project" value="UniProtKB-SubCell"/>
</dbReference>
<dbReference type="GO" id="GO:0004497">
    <property type="term" value="F:monooxygenase activity"/>
    <property type="evidence" value="ECO:0007669"/>
    <property type="project" value="UniProtKB-KW"/>
</dbReference>
<dbReference type="GO" id="GO:0016984">
    <property type="term" value="F:ribulose-bisphosphate carboxylase activity"/>
    <property type="evidence" value="ECO:0007669"/>
    <property type="project" value="UniProtKB-EC"/>
</dbReference>
<dbReference type="GO" id="GO:0009853">
    <property type="term" value="P:photorespiration"/>
    <property type="evidence" value="ECO:0007669"/>
    <property type="project" value="UniProtKB-KW"/>
</dbReference>
<dbReference type="GO" id="GO:0019253">
    <property type="term" value="P:reductive pentose-phosphate cycle"/>
    <property type="evidence" value="ECO:0007669"/>
    <property type="project" value="UniProtKB-KW"/>
</dbReference>
<sequence>MSPQTETKAKVGFQAGVKDYKLTYYT</sequence>
<accession>P05699</accession>